<dbReference type="EMBL" id="CP001252">
    <property type="protein sequence ID" value="ACK48513.1"/>
    <property type="molecule type" value="Genomic_DNA"/>
</dbReference>
<dbReference type="RefSeq" id="WP_006083584.1">
    <property type="nucleotide sequence ID" value="NC_011663.1"/>
</dbReference>
<dbReference type="SMR" id="B8EBI9"/>
<dbReference type="GeneID" id="11770572"/>
<dbReference type="KEGG" id="sbp:Sbal223_4040"/>
<dbReference type="HOGENOM" id="CLU_098841_0_1_6"/>
<dbReference type="Proteomes" id="UP000002507">
    <property type="component" value="Chromosome"/>
</dbReference>
<dbReference type="GO" id="GO:0022625">
    <property type="term" value="C:cytosolic large ribosomal subunit"/>
    <property type="evidence" value="ECO:0007669"/>
    <property type="project" value="TreeGrafter"/>
</dbReference>
<dbReference type="GO" id="GO:0008097">
    <property type="term" value="F:5S rRNA binding"/>
    <property type="evidence" value="ECO:0007669"/>
    <property type="project" value="TreeGrafter"/>
</dbReference>
<dbReference type="GO" id="GO:0003735">
    <property type="term" value="F:structural constituent of ribosome"/>
    <property type="evidence" value="ECO:0007669"/>
    <property type="project" value="InterPro"/>
</dbReference>
<dbReference type="GO" id="GO:0006412">
    <property type="term" value="P:translation"/>
    <property type="evidence" value="ECO:0007669"/>
    <property type="project" value="UniProtKB-UniRule"/>
</dbReference>
<dbReference type="CDD" id="cd00432">
    <property type="entry name" value="Ribosomal_L18_L5e"/>
    <property type="match status" value="1"/>
</dbReference>
<dbReference type="FunFam" id="3.30.420.100:FF:000001">
    <property type="entry name" value="50S ribosomal protein L18"/>
    <property type="match status" value="1"/>
</dbReference>
<dbReference type="Gene3D" id="3.30.420.100">
    <property type="match status" value="1"/>
</dbReference>
<dbReference type="HAMAP" id="MF_01337_B">
    <property type="entry name" value="Ribosomal_uL18_B"/>
    <property type="match status" value="1"/>
</dbReference>
<dbReference type="InterPro" id="IPR004389">
    <property type="entry name" value="Ribosomal_uL18_bac-type"/>
</dbReference>
<dbReference type="InterPro" id="IPR005484">
    <property type="entry name" value="Ribosomal_uL18_bac/euk"/>
</dbReference>
<dbReference type="NCBIfam" id="TIGR00060">
    <property type="entry name" value="L18_bact"/>
    <property type="match status" value="1"/>
</dbReference>
<dbReference type="PANTHER" id="PTHR12899">
    <property type="entry name" value="39S RIBOSOMAL PROTEIN L18, MITOCHONDRIAL"/>
    <property type="match status" value="1"/>
</dbReference>
<dbReference type="PANTHER" id="PTHR12899:SF3">
    <property type="entry name" value="LARGE RIBOSOMAL SUBUNIT PROTEIN UL18M"/>
    <property type="match status" value="1"/>
</dbReference>
<dbReference type="Pfam" id="PF00861">
    <property type="entry name" value="Ribosomal_L18p"/>
    <property type="match status" value="1"/>
</dbReference>
<dbReference type="SUPFAM" id="SSF53137">
    <property type="entry name" value="Translational machinery components"/>
    <property type="match status" value="1"/>
</dbReference>
<protein>
    <recommendedName>
        <fullName evidence="1">Large ribosomal subunit protein uL18</fullName>
    </recommendedName>
    <alternativeName>
        <fullName evidence="2">50S ribosomal protein L18</fullName>
    </alternativeName>
</protein>
<reference key="1">
    <citation type="submission" date="2008-12" db="EMBL/GenBank/DDBJ databases">
        <title>Complete sequence of chromosome of Shewanella baltica OS223.</title>
        <authorList>
            <consortium name="US DOE Joint Genome Institute"/>
            <person name="Lucas S."/>
            <person name="Copeland A."/>
            <person name="Lapidus A."/>
            <person name="Glavina del Rio T."/>
            <person name="Dalin E."/>
            <person name="Tice H."/>
            <person name="Bruce D."/>
            <person name="Goodwin L."/>
            <person name="Pitluck S."/>
            <person name="Chertkov O."/>
            <person name="Meincke L."/>
            <person name="Brettin T."/>
            <person name="Detter J.C."/>
            <person name="Han C."/>
            <person name="Kuske C.R."/>
            <person name="Larimer F."/>
            <person name="Land M."/>
            <person name="Hauser L."/>
            <person name="Kyrpides N."/>
            <person name="Ovchinnikova G."/>
            <person name="Brettar I."/>
            <person name="Rodrigues J."/>
            <person name="Konstantinidis K."/>
            <person name="Tiedje J."/>
        </authorList>
    </citation>
    <scope>NUCLEOTIDE SEQUENCE [LARGE SCALE GENOMIC DNA]</scope>
    <source>
        <strain>OS223</strain>
    </source>
</reference>
<gene>
    <name evidence="1" type="primary">rplR</name>
    <name type="ordered locus">Sbal223_4040</name>
</gene>
<organism>
    <name type="scientific">Shewanella baltica (strain OS223)</name>
    <dbReference type="NCBI Taxonomy" id="407976"/>
    <lineage>
        <taxon>Bacteria</taxon>
        <taxon>Pseudomonadati</taxon>
        <taxon>Pseudomonadota</taxon>
        <taxon>Gammaproteobacteria</taxon>
        <taxon>Alteromonadales</taxon>
        <taxon>Shewanellaceae</taxon>
        <taxon>Shewanella</taxon>
    </lineage>
</organism>
<sequence length="116" mass="12683">MDKKTSRLRRATRARKKIQELGVNRLVVHRTPRHIYAQVINPEAQVLAAASTVEKAVKELLKSTGNVDAAKAVGKFVAERAIEKGVTSVAFDRSGFKYHGRVAALADAAREAGLKF</sequence>
<name>RL18_SHEB2</name>
<proteinExistence type="inferred from homology"/>
<accession>B8EBI9</accession>
<comment type="function">
    <text evidence="1">This is one of the proteins that bind and probably mediate the attachment of the 5S RNA into the large ribosomal subunit, where it forms part of the central protuberance.</text>
</comment>
<comment type="subunit">
    <text evidence="1">Part of the 50S ribosomal subunit; part of the 5S rRNA/L5/L18/L25 subcomplex. Contacts the 5S and 23S rRNAs.</text>
</comment>
<comment type="similarity">
    <text evidence="1">Belongs to the universal ribosomal protein uL18 family.</text>
</comment>
<keyword id="KW-0687">Ribonucleoprotein</keyword>
<keyword id="KW-0689">Ribosomal protein</keyword>
<keyword id="KW-0694">RNA-binding</keyword>
<keyword id="KW-0699">rRNA-binding</keyword>
<evidence type="ECO:0000255" key="1">
    <source>
        <dbReference type="HAMAP-Rule" id="MF_01337"/>
    </source>
</evidence>
<evidence type="ECO:0000305" key="2"/>
<feature type="chain" id="PRO_1000166247" description="Large ribosomal subunit protein uL18">
    <location>
        <begin position="1"/>
        <end position="116"/>
    </location>
</feature>